<proteinExistence type="inferred from homology"/>
<reference key="1">
    <citation type="journal article" date="2010" name="PLoS ONE">
        <title>The genome sequence of the rumen methanogen Methanobrevibacter ruminantium reveals new possibilities for controlling ruminant methane emissions.</title>
        <authorList>
            <person name="Leahy S.C."/>
            <person name="Kelly W.J."/>
            <person name="Altermann E."/>
            <person name="Ronimus R.S."/>
            <person name="Yeoman C.J."/>
            <person name="Pacheco D.M."/>
            <person name="Li D."/>
            <person name="Kong Z."/>
            <person name="McTavish S."/>
            <person name="Sang C."/>
            <person name="Lambie S.C."/>
            <person name="Janssen P.H."/>
            <person name="Dey D."/>
            <person name="Attwood G.T."/>
        </authorList>
    </citation>
    <scope>NUCLEOTIDE SEQUENCE [LARGE SCALE GENOMIC DNA]</scope>
    <source>
        <strain>ATCC 35063 / DSM 1093 / JCM 13430 / OCM 146 / M1</strain>
    </source>
</reference>
<dbReference type="EMBL" id="CP001719">
    <property type="protein sequence ID" value="ADC47150.1"/>
    <property type="molecule type" value="Genomic_DNA"/>
</dbReference>
<dbReference type="RefSeq" id="WP_012956099.1">
    <property type="nucleotide sequence ID" value="NC_013790.1"/>
</dbReference>
<dbReference type="SMR" id="D3E3N9"/>
<dbReference type="STRING" id="634498.mru_1300"/>
<dbReference type="GeneID" id="8770951"/>
<dbReference type="KEGG" id="mru:mru_1300"/>
<dbReference type="PATRIC" id="fig|634498.28.peg.1303"/>
<dbReference type="eggNOG" id="arCOG01559">
    <property type="taxonomic scope" value="Archaea"/>
</dbReference>
<dbReference type="HOGENOM" id="CLU_002794_11_1_2"/>
<dbReference type="OrthoDB" id="6290at2157"/>
<dbReference type="Proteomes" id="UP000008680">
    <property type="component" value="Chromosome"/>
</dbReference>
<dbReference type="GO" id="GO:0005829">
    <property type="term" value="C:cytosol"/>
    <property type="evidence" value="ECO:0007669"/>
    <property type="project" value="TreeGrafter"/>
</dbReference>
<dbReference type="GO" id="GO:1990904">
    <property type="term" value="C:ribonucleoprotein complex"/>
    <property type="evidence" value="ECO:0007669"/>
    <property type="project" value="TreeGrafter"/>
</dbReference>
<dbReference type="GO" id="GO:0005525">
    <property type="term" value="F:GTP binding"/>
    <property type="evidence" value="ECO:0007669"/>
    <property type="project" value="UniProtKB-UniRule"/>
</dbReference>
<dbReference type="GO" id="GO:0003924">
    <property type="term" value="F:GTPase activity"/>
    <property type="evidence" value="ECO:0007669"/>
    <property type="project" value="InterPro"/>
</dbReference>
<dbReference type="GO" id="GO:0003746">
    <property type="term" value="F:translation elongation factor activity"/>
    <property type="evidence" value="ECO:0007669"/>
    <property type="project" value="UniProtKB-UniRule"/>
</dbReference>
<dbReference type="CDD" id="cd01681">
    <property type="entry name" value="aeEF2_snRNP_like_IV"/>
    <property type="match status" value="1"/>
</dbReference>
<dbReference type="CDD" id="cd16268">
    <property type="entry name" value="EF2_II"/>
    <property type="match status" value="1"/>
</dbReference>
<dbReference type="CDD" id="cd16261">
    <property type="entry name" value="EF2_snRNP_III"/>
    <property type="match status" value="1"/>
</dbReference>
<dbReference type="CDD" id="cd03713">
    <property type="entry name" value="EFG_mtEFG_C"/>
    <property type="match status" value="1"/>
</dbReference>
<dbReference type="FunFam" id="3.40.50.300:FF:000684">
    <property type="entry name" value="Elongation factor 2"/>
    <property type="match status" value="1"/>
</dbReference>
<dbReference type="FunFam" id="3.30.70.240:FF:000001">
    <property type="entry name" value="Elongation factor G"/>
    <property type="match status" value="1"/>
</dbReference>
<dbReference type="FunFam" id="3.30.70.870:FF:000002">
    <property type="entry name" value="Translation elongation factor 2"/>
    <property type="match status" value="1"/>
</dbReference>
<dbReference type="Gene3D" id="3.30.230.10">
    <property type="match status" value="1"/>
</dbReference>
<dbReference type="Gene3D" id="3.30.70.240">
    <property type="match status" value="1"/>
</dbReference>
<dbReference type="Gene3D" id="3.30.70.870">
    <property type="entry name" value="Elongation Factor G (Translational Gtpase), domain 3"/>
    <property type="match status" value="1"/>
</dbReference>
<dbReference type="Gene3D" id="3.40.50.300">
    <property type="entry name" value="P-loop containing nucleotide triphosphate hydrolases"/>
    <property type="match status" value="1"/>
</dbReference>
<dbReference type="Gene3D" id="2.40.30.10">
    <property type="entry name" value="Translation factors"/>
    <property type="match status" value="1"/>
</dbReference>
<dbReference type="HAMAP" id="MF_00054_A">
    <property type="entry name" value="EF_G_EF_2_A"/>
    <property type="match status" value="1"/>
</dbReference>
<dbReference type="InterPro" id="IPR041095">
    <property type="entry name" value="EFG_II"/>
</dbReference>
<dbReference type="InterPro" id="IPR035647">
    <property type="entry name" value="EFG_III/V"/>
</dbReference>
<dbReference type="InterPro" id="IPR035649">
    <property type="entry name" value="EFG_V"/>
</dbReference>
<dbReference type="InterPro" id="IPR000640">
    <property type="entry name" value="EFG_V-like"/>
</dbReference>
<dbReference type="InterPro" id="IPR004161">
    <property type="entry name" value="EFTu-like_2"/>
</dbReference>
<dbReference type="InterPro" id="IPR031157">
    <property type="entry name" value="G_TR_CS"/>
</dbReference>
<dbReference type="InterPro" id="IPR027417">
    <property type="entry name" value="P-loop_NTPase"/>
</dbReference>
<dbReference type="InterPro" id="IPR020568">
    <property type="entry name" value="Ribosomal_Su5_D2-typ_SF"/>
</dbReference>
<dbReference type="InterPro" id="IPR014721">
    <property type="entry name" value="Ribsml_uS5_D2-typ_fold_subgr"/>
</dbReference>
<dbReference type="InterPro" id="IPR005225">
    <property type="entry name" value="Small_GTP-bd"/>
</dbReference>
<dbReference type="InterPro" id="IPR000795">
    <property type="entry name" value="T_Tr_GTP-bd_dom"/>
</dbReference>
<dbReference type="InterPro" id="IPR009000">
    <property type="entry name" value="Transl_B-barrel_sf"/>
</dbReference>
<dbReference type="InterPro" id="IPR004543">
    <property type="entry name" value="Transl_elong_EFG/EF2_arc"/>
</dbReference>
<dbReference type="InterPro" id="IPR005517">
    <property type="entry name" value="Transl_elong_EFG/EF2_IV"/>
</dbReference>
<dbReference type="NCBIfam" id="TIGR00490">
    <property type="entry name" value="aEF-2"/>
    <property type="match status" value="1"/>
</dbReference>
<dbReference type="NCBIfam" id="TIGR00231">
    <property type="entry name" value="small_GTP"/>
    <property type="match status" value="1"/>
</dbReference>
<dbReference type="PANTHER" id="PTHR42908:SF3">
    <property type="entry name" value="ELONGATION FACTOR-LIKE GTPASE 1"/>
    <property type="match status" value="1"/>
</dbReference>
<dbReference type="PANTHER" id="PTHR42908">
    <property type="entry name" value="TRANSLATION ELONGATION FACTOR-RELATED"/>
    <property type="match status" value="1"/>
</dbReference>
<dbReference type="Pfam" id="PF00679">
    <property type="entry name" value="EFG_C"/>
    <property type="match status" value="1"/>
</dbReference>
<dbReference type="Pfam" id="PF14492">
    <property type="entry name" value="EFG_III"/>
    <property type="match status" value="1"/>
</dbReference>
<dbReference type="Pfam" id="PF03764">
    <property type="entry name" value="EFG_IV"/>
    <property type="match status" value="1"/>
</dbReference>
<dbReference type="Pfam" id="PF00009">
    <property type="entry name" value="GTP_EFTU"/>
    <property type="match status" value="1"/>
</dbReference>
<dbReference type="Pfam" id="PF03144">
    <property type="entry name" value="GTP_EFTU_D2"/>
    <property type="match status" value="1"/>
</dbReference>
<dbReference type="PRINTS" id="PR00315">
    <property type="entry name" value="ELONGATNFCT"/>
</dbReference>
<dbReference type="SMART" id="SM00838">
    <property type="entry name" value="EFG_C"/>
    <property type="match status" value="1"/>
</dbReference>
<dbReference type="SMART" id="SM00889">
    <property type="entry name" value="EFG_IV"/>
    <property type="match status" value="1"/>
</dbReference>
<dbReference type="SUPFAM" id="SSF54980">
    <property type="entry name" value="EF-G C-terminal domain-like"/>
    <property type="match status" value="2"/>
</dbReference>
<dbReference type="SUPFAM" id="SSF52540">
    <property type="entry name" value="P-loop containing nucleoside triphosphate hydrolases"/>
    <property type="match status" value="1"/>
</dbReference>
<dbReference type="SUPFAM" id="SSF54211">
    <property type="entry name" value="Ribosomal protein S5 domain 2-like"/>
    <property type="match status" value="1"/>
</dbReference>
<dbReference type="SUPFAM" id="SSF50447">
    <property type="entry name" value="Translation proteins"/>
    <property type="match status" value="1"/>
</dbReference>
<dbReference type="PROSITE" id="PS00301">
    <property type="entry name" value="G_TR_1"/>
    <property type="match status" value="1"/>
</dbReference>
<dbReference type="PROSITE" id="PS51722">
    <property type="entry name" value="G_TR_2"/>
    <property type="match status" value="1"/>
</dbReference>
<evidence type="ECO:0000255" key="1">
    <source>
        <dbReference type="HAMAP-Rule" id="MF_00054"/>
    </source>
</evidence>
<feature type="chain" id="PRO_0000408961" description="Elongation factor 2">
    <location>
        <begin position="1"/>
        <end position="731"/>
    </location>
</feature>
<feature type="domain" description="tr-type G">
    <location>
        <begin position="19"/>
        <end position="234"/>
    </location>
</feature>
<feature type="binding site" evidence="1">
    <location>
        <begin position="28"/>
        <end position="35"/>
    </location>
    <ligand>
        <name>GTP</name>
        <dbReference type="ChEBI" id="CHEBI:37565"/>
    </ligand>
</feature>
<feature type="binding site" evidence="1">
    <location>
        <begin position="94"/>
        <end position="98"/>
    </location>
    <ligand>
        <name>GTP</name>
        <dbReference type="ChEBI" id="CHEBI:37565"/>
    </ligand>
</feature>
<feature type="binding site" evidence="1">
    <location>
        <begin position="148"/>
        <end position="151"/>
    </location>
    <ligand>
        <name>GTP</name>
        <dbReference type="ChEBI" id="CHEBI:37565"/>
    </ligand>
</feature>
<feature type="modified residue" description="Diphthamide" evidence="1">
    <location>
        <position position="598"/>
    </location>
</feature>
<accession>D3E3N9</accession>
<comment type="function">
    <text evidence="1">Catalyzes the GTP-dependent ribosomal translocation step during translation elongation. During this step, the ribosome changes from the pre-translocational (PRE) to the post-translocational (POST) state as the newly formed A-site-bound peptidyl-tRNA and P-site-bound deacylated tRNA move to the P and E sites, respectively. Catalyzes the coordinated movement of the two tRNA molecules, the mRNA and conformational changes in the ribosome.</text>
</comment>
<comment type="subcellular location">
    <subcellularLocation>
        <location evidence="1">Cytoplasm</location>
    </subcellularLocation>
</comment>
<comment type="similarity">
    <text evidence="1">Belongs to the TRAFAC class translation factor GTPase superfamily. Classic translation factor GTPase family. EF-G/EF-2 subfamily.</text>
</comment>
<name>EF2_METRM</name>
<gene>
    <name evidence="1" type="primary">fusA</name>
    <name type="ordered locus">mru_1300</name>
</gene>
<protein>
    <recommendedName>
        <fullName evidence="1">Elongation factor 2</fullName>
        <shortName evidence="1">EF-2</shortName>
    </recommendedName>
</protein>
<organism>
    <name type="scientific">Methanobrevibacter ruminantium (strain ATCC 35063 / DSM 1093 / JCM 13430 / OCM 146 / M1)</name>
    <name type="common">Methanobacterium ruminantium</name>
    <dbReference type="NCBI Taxonomy" id="634498"/>
    <lineage>
        <taxon>Archaea</taxon>
        <taxon>Methanobacteriati</taxon>
        <taxon>Methanobacteriota</taxon>
        <taxon>Methanomada group</taxon>
        <taxon>Methanobacteria</taxon>
        <taxon>Methanobacteriales</taxon>
        <taxon>Methanobacteriaceae</taxon>
        <taxon>Methanobrevibacter</taxon>
    </lineage>
</organism>
<keyword id="KW-0963">Cytoplasm</keyword>
<keyword id="KW-0251">Elongation factor</keyword>
<keyword id="KW-0342">GTP-binding</keyword>
<keyword id="KW-0547">Nucleotide-binding</keyword>
<keyword id="KW-0648">Protein biosynthesis</keyword>
<sequence>MSRRDKMIAKIKELMYKPEYIRNIGICAHIDHGKTTLSDNLLAGAGLISEDLAGEALGMDTKKDEQERGITIDAANASMVQEYEGEQYLINLIDTPGHVDFGGDVTRAMRAVDGAVVVVCAVDGVMPQTETVLKQALRENVKPVLFINKVDRLINELKLGPEELLKQLTSIIVEVNALIKSLAPKDKKNEWMVNVEEGSVAFGSAFKNWAINIPKMQETKFTFKDIIDYCNEGKEDELKQLLPLTEVLLNMVVKHLPSPNVAQVYRVPKIWDGDIESEVGQTMIKMSPDGPLAGMITNVAVDKHAGIVATCRIYGGTLEKSSEIYLVGSHGKARVQQAGIFMGAETIDTGKVPVGNIAYLTGVKGASAGETICSADCIIDEFEPIDHISEPVVTVAVEAKNTKDLPKLIEVLRQVSKEDPTIKVEINETTGEQLISGMGELHLEVVTNRIINDKKLEILVSEPIIVYKESVLGHSPVIEGKSPNKHNRFYIDVQPLDKPLYDALIEGDLKEGRIKTKETAQDFIELGMDKEEARRVWDVYNRSMFINMTRGIQYLDEVKELLLEGFEAALKDGPLANEEAVGLKFILSDAKLHEDAVHRGPAQVLPAIKKAIYASIMSANPCLLEPIQKVFISAPLEYMGNCNKDIQNRRGRIIGQETKGVIAEMDFEVPIAKMFGFAGDIRSATGGKGDFSTEMKGFETLPIYLQDDIVRQIRTRKGLSPEPYGPEHYSA</sequence>